<reference key="1">
    <citation type="submission" date="2007-07" db="EMBL/GenBank/DDBJ databases">
        <title>Complete genome sequence of Campylobacter jejuni subsp doylei 269.97 isolated from human blood.</title>
        <authorList>
            <person name="Fouts D.E."/>
            <person name="Mongodin E.F."/>
            <person name="Puiu D."/>
            <person name="Sebastian Y."/>
            <person name="Miller W.G."/>
            <person name="Mandrell R.E."/>
            <person name="Lastovica A.J."/>
            <person name="Nelson K.E."/>
        </authorList>
    </citation>
    <scope>NUCLEOTIDE SEQUENCE [LARGE SCALE GENOMIC DNA]</scope>
    <source>
        <strain>ATCC BAA-1458 / RM4099 / 269.97</strain>
    </source>
</reference>
<accession>A7H1H9</accession>
<organism>
    <name type="scientific">Campylobacter jejuni subsp. doylei (strain ATCC BAA-1458 / RM4099 / 269.97)</name>
    <dbReference type="NCBI Taxonomy" id="360109"/>
    <lineage>
        <taxon>Bacteria</taxon>
        <taxon>Pseudomonadati</taxon>
        <taxon>Campylobacterota</taxon>
        <taxon>Epsilonproteobacteria</taxon>
        <taxon>Campylobacterales</taxon>
        <taxon>Campylobacteraceae</taxon>
        <taxon>Campylobacter</taxon>
    </lineage>
</organism>
<proteinExistence type="inferred from homology"/>
<evidence type="ECO:0000255" key="1">
    <source>
        <dbReference type="HAMAP-Rule" id="MF_01346"/>
    </source>
</evidence>
<keyword id="KW-0066">ATP synthesis</keyword>
<keyword id="KW-0067">ATP-binding</keyword>
<keyword id="KW-0997">Cell inner membrane</keyword>
<keyword id="KW-1003">Cell membrane</keyword>
<keyword id="KW-0139">CF(1)</keyword>
<keyword id="KW-0375">Hydrogen ion transport</keyword>
<keyword id="KW-0406">Ion transport</keyword>
<keyword id="KW-0472">Membrane</keyword>
<keyword id="KW-0547">Nucleotide-binding</keyword>
<keyword id="KW-1278">Translocase</keyword>
<keyword id="KW-0813">Transport</keyword>
<name>ATPA_CAMJD</name>
<feature type="chain" id="PRO_1000055059" description="ATP synthase subunit alpha">
    <location>
        <begin position="1"/>
        <end position="501"/>
    </location>
</feature>
<feature type="binding site" evidence="1">
    <location>
        <begin position="169"/>
        <end position="176"/>
    </location>
    <ligand>
        <name>ATP</name>
        <dbReference type="ChEBI" id="CHEBI:30616"/>
    </ligand>
</feature>
<feature type="site" description="Required for activity" evidence="1">
    <location>
        <position position="362"/>
    </location>
</feature>
<comment type="function">
    <text evidence="1">Produces ATP from ADP in the presence of a proton gradient across the membrane. The alpha chain is a regulatory subunit.</text>
</comment>
<comment type="catalytic activity">
    <reaction evidence="1">
        <text>ATP + H2O + 4 H(+)(in) = ADP + phosphate + 5 H(+)(out)</text>
        <dbReference type="Rhea" id="RHEA:57720"/>
        <dbReference type="ChEBI" id="CHEBI:15377"/>
        <dbReference type="ChEBI" id="CHEBI:15378"/>
        <dbReference type="ChEBI" id="CHEBI:30616"/>
        <dbReference type="ChEBI" id="CHEBI:43474"/>
        <dbReference type="ChEBI" id="CHEBI:456216"/>
        <dbReference type="EC" id="7.1.2.2"/>
    </reaction>
</comment>
<comment type="subunit">
    <text evidence="1">F-type ATPases have 2 components, CF(1) - the catalytic core - and CF(0) - the membrane proton channel. CF(1) has five subunits: alpha(3), beta(3), gamma(1), delta(1), epsilon(1). CF(0) has three main subunits: a(1), b(2) and c(9-12). The alpha and beta chains form an alternating ring which encloses part of the gamma chain. CF(1) is attached to CF(0) by a central stalk formed by the gamma and epsilon chains, while a peripheral stalk is formed by the delta and b chains.</text>
</comment>
<comment type="subcellular location">
    <subcellularLocation>
        <location evidence="1">Cell inner membrane</location>
        <topology evidence="1">Peripheral membrane protein</topology>
    </subcellularLocation>
</comment>
<comment type="similarity">
    <text evidence="1">Belongs to the ATPase alpha/beta chains family.</text>
</comment>
<dbReference type="EC" id="7.1.2.2" evidence="1"/>
<dbReference type="EMBL" id="CP000768">
    <property type="protein sequence ID" value="ABS44333.1"/>
    <property type="molecule type" value="Genomic_DNA"/>
</dbReference>
<dbReference type="SMR" id="A7H1H9"/>
<dbReference type="KEGG" id="cjd:JJD26997_0112"/>
<dbReference type="HOGENOM" id="CLU_010091_2_1_7"/>
<dbReference type="Proteomes" id="UP000002302">
    <property type="component" value="Chromosome"/>
</dbReference>
<dbReference type="GO" id="GO:0005886">
    <property type="term" value="C:plasma membrane"/>
    <property type="evidence" value="ECO:0007669"/>
    <property type="project" value="UniProtKB-SubCell"/>
</dbReference>
<dbReference type="GO" id="GO:0045259">
    <property type="term" value="C:proton-transporting ATP synthase complex"/>
    <property type="evidence" value="ECO:0007669"/>
    <property type="project" value="UniProtKB-KW"/>
</dbReference>
<dbReference type="GO" id="GO:0043531">
    <property type="term" value="F:ADP binding"/>
    <property type="evidence" value="ECO:0007669"/>
    <property type="project" value="TreeGrafter"/>
</dbReference>
<dbReference type="GO" id="GO:0005524">
    <property type="term" value="F:ATP binding"/>
    <property type="evidence" value="ECO:0007669"/>
    <property type="project" value="UniProtKB-UniRule"/>
</dbReference>
<dbReference type="GO" id="GO:0046933">
    <property type="term" value="F:proton-transporting ATP synthase activity, rotational mechanism"/>
    <property type="evidence" value="ECO:0007669"/>
    <property type="project" value="UniProtKB-UniRule"/>
</dbReference>
<dbReference type="CDD" id="cd18113">
    <property type="entry name" value="ATP-synt_F1_alpha_C"/>
    <property type="match status" value="1"/>
</dbReference>
<dbReference type="CDD" id="cd18116">
    <property type="entry name" value="ATP-synt_F1_alpha_N"/>
    <property type="match status" value="1"/>
</dbReference>
<dbReference type="CDD" id="cd01132">
    <property type="entry name" value="F1-ATPase_alpha_CD"/>
    <property type="match status" value="1"/>
</dbReference>
<dbReference type="FunFam" id="1.20.150.20:FF:000001">
    <property type="entry name" value="ATP synthase subunit alpha"/>
    <property type="match status" value="1"/>
</dbReference>
<dbReference type="FunFam" id="2.40.30.20:FF:000001">
    <property type="entry name" value="ATP synthase subunit alpha"/>
    <property type="match status" value="1"/>
</dbReference>
<dbReference type="FunFam" id="3.40.50.300:FF:000002">
    <property type="entry name" value="ATP synthase subunit alpha"/>
    <property type="match status" value="1"/>
</dbReference>
<dbReference type="Gene3D" id="2.40.30.20">
    <property type="match status" value="1"/>
</dbReference>
<dbReference type="Gene3D" id="1.20.150.20">
    <property type="entry name" value="ATP synthase alpha/beta chain, C-terminal domain"/>
    <property type="match status" value="1"/>
</dbReference>
<dbReference type="Gene3D" id="3.40.50.300">
    <property type="entry name" value="P-loop containing nucleotide triphosphate hydrolases"/>
    <property type="match status" value="1"/>
</dbReference>
<dbReference type="HAMAP" id="MF_01346">
    <property type="entry name" value="ATP_synth_alpha_bact"/>
    <property type="match status" value="1"/>
</dbReference>
<dbReference type="InterPro" id="IPR023366">
    <property type="entry name" value="ATP_synth_asu-like_sf"/>
</dbReference>
<dbReference type="InterPro" id="IPR000793">
    <property type="entry name" value="ATP_synth_asu_C"/>
</dbReference>
<dbReference type="InterPro" id="IPR038376">
    <property type="entry name" value="ATP_synth_asu_C_sf"/>
</dbReference>
<dbReference type="InterPro" id="IPR033732">
    <property type="entry name" value="ATP_synth_F1_a_nt-bd_dom"/>
</dbReference>
<dbReference type="InterPro" id="IPR005294">
    <property type="entry name" value="ATP_synth_F1_asu"/>
</dbReference>
<dbReference type="InterPro" id="IPR020003">
    <property type="entry name" value="ATPase_a/bsu_AS"/>
</dbReference>
<dbReference type="InterPro" id="IPR004100">
    <property type="entry name" value="ATPase_F1/V1/A1_a/bsu_N"/>
</dbReference>
<dbReference type="InterPro" id="IPR036121">
    <property type="entry name" value="ATPase_F1/V1/A1_a/bsu_N_sf"/>
</dbReference>
<dbReference type="InterPro" id="IPR000194">
    <property type="entry name" value="ATPase_F1/V1/A1_a/bsu_nucl-bd"/>
</dbReference>
<dbReference type="InterPro" id="IPR027417">
    <property type="entry name" value="P-loop_NTPase"/>
</dbReference>
<dbReference type="NCBIfam" id="TIGR00962">
    <property type="entry name" value="atpA"/>
    <property type="match status" value="1"/>
</dbReference>
<dbReference type="NCBIfam" id="NF009884">
    <property type="entry name" value="PRK13343.1"/>
    <property type="match status" value="1"/>
</dbReference>
<dbReference type="PANTHER" id="PTHR48082">
    <property type="entry name" value="ATP SYNTHASE SUBUNIT ALPHA, MITOCHONDRIAL"/>
    <property type="match status" value="1"/>
</dbReference>
<dbReference type="PANTHER" id="PTHR48082:SF2">
    <property type="entry name" value="ATP SYNTHASE SUBUNIT ALPHA, MITOCHONDRIAL"/>
    <property type="match status" value="1"/>
</dbReference>
<dbReference type="Pfam" id="PF00006">
    <property type="entry name" value="ATP-synt_ab"/>
    <property type="match status" value="1"/>
</dbReference>
<dbReference type="Pfam" id="PF00306">
    <property type="entry name" value="ATP-synt_ab_C"/>
    <property type="match status" value="1"/>
</dbReference>
<dbReference type="Pfam" id="PF02874">
    <property type="entry name" value="ATP-synt_ab_N"/>
    <property type="match status" value="1"/>
</dbReference>
<dbReference type="PIRSF" id="PIRSF039088">
    <property type="entry name" value="F_ATPase_subunit_alpha"/>
    <property type="match status" value="1"/>
</dbReference>
<dbReference type="SUPFAM" id="SSF47917">
    <property type="entry name" value="C-terminal domain of alpha and beta subunits of F1 ATP synthase"/>
    <property type="match status" value="1"/>
</dbReference>
<dbReference type="SUPFAM" id="SSF50615">
    <property type="entry name" value="N-terminal domain of alpha and beta subunits of F1 ATP synthase"/>
    <property type="match status" value="1"/>
</dbReference>
<dbReference type="SUPFAM" id="SSF52540">
    <property type="entry name" value="P-loop containing nucleoside triphosphate hydrolases"/>
    <property type="match status" value="1"/>
</dbReference>
<dbReference type="PROSITE" id="PS00152">
    <property type="entry name" value="ATPASE_ALPHA_BETA"/>
    <property type="match status" value="1"/>
</dbReference>
<gene>
    <name evidence="1" type="primary">atpA</name>
    <name type="ordered locus">JJD26997_0112</name>
</gene>
<sequence length="501" mass="54787">MKFKADEISSIIKERIENFDLNLEIEETGKIISVADGVAKVYGLKNIMAGEMVEFENGDKGMALNLEESSVGIVILGKGEGLKEGASVKRLKKLLKVPVGEALIGRVVNALGEPIDAKGVVNANEYRFVEEKAKGIMARKSVHEPLHTGIKAIDALVPIGRGQRELIIGDRQTGKTTVAVDTIISQRGQGVICIYVAIGQKQSTVAQVVKRLEEHGAMEYTIVVNAGASDPAALQYLAPYAGVTMGEFFRDNAKHALIVYDDLSKHAVAYREMSLILRRPPGREAYPGDVFYLHSRLLERASKLNDELGAGSLTALPIIETQAGDVSAYIPTNVISITDGQIFLETDLFNSGIRPAINVGLSVSRVGGAAQIKATKQVSGTLRLDLAQYRELQAFTQFASDLDEASRKQLERGQRMVELLKQPPYSPLSVEKQVVLIFAGTKGFLDDIAVSRIKEFEDGIYPFIEAKHPDIFEQIRSKKALDSDLEEKLAKAINEFKANHL</sequence>
<protein>
    <recommendedName>
        <fullName evidence="1">ATP synthase subunit alpha</fullName>
        <ecNumber evidence="1">7.1.2.2</ecNumber>
    </recommendedName>
    <alternativeName>
        <fullName evidence="1">ATP synthase F1 sector subunit alpha</fullName>
    </alternativeName>
    <alternativeName>
        <fullName evidence="1">F-ATPase subunit alpha</fullName>
    </alternativeName>
</protein>